<proteinExistence type="evidence at protein level"/>
<organism>
    <name type="scientific">Aspergillus flavus</name>
    <dbReference type="NCBI Taxonomy" id="5059"/>
    <lineage>
        <taxon>Eukaryota</taxon>
        <taxon>Fungi</taxon>
        <taxon>Dikarya</taxon>
        <taxon>Ascomycota</taxon>
        <taxon>Pezizomycotina</taxon>
        <taxon>Eurotiomycetes</taxon>
        <taxon>Eurotiomycetidae</taxon>
        <taxon>Eurotiales</taxon>
        <taxon>Aspergillaceae</taxon>
        <taxon>Aspergillus</taxon>
        <taxon>Aspergillus subgen. Circumdati</taxon>
    </lineage>
</organism>
<comment type="function">
    <text evidence="1 2">Elastase inhibitor. Inhibitor of A.flavus elastase with a Ki of 40 nM. Inhibitor of A.fumigatus elastase and human leukocyte elastase. Inhibits the fibrinogenase and collagenase activities of A.flavus elastase. Does not inhibit porcine pancreatic elastase, trypsin, chymotrypsin, thrombin or A.acutus AC1-proteinase.</text>
</comment>
<comment type="biophysicochemical properties">
    <phDependence>
        <text evidence="1">Stable from pH 6 to 10.</text>
    </phDependence>
    <temperatureDependence>
        <text evidence="1">Stable at temperatures below 80 degrees Celsius.</text>
    </temperatureDependence>
</comment>
<comment type="subcellular location">
    <subcellularLocation>
        <location evidence="5">Secreted</location>
    </subcellularLocation>
</comment>
<comment type="mass spectrometry" mass="7525.8" method="MALDI" evidence="1"/>
<comment type="miscellaneous">
    <text evidence="1">On the 2D-gel the determined pI of this protein is: 7.4.</text>
</comment>
<reference evidence="5" key="1">
    <citation type="journal article" date="2007" name="Nippon Ishinkin Gakkai Zasshi">
        <title>Characterization and primary structure of elastase inhibitor, AFLEI, from Aspergillus flavus.</title>
        <authorList>
            <person name="Okumura Y."/>
            <person name="Ogawa K."/>
            <person name="Uchiya K."/>
        </authorList>
    </citation>
    <scope>PROTEIN SEQUENCE</scope>
    <scope>FUNCTION</scope>
    <scope>DISULFIDE BOND</scope>
</reference>
<reference evidence="5" key="2">
    <citation type="journal article" date="2006" name="Nippon Ishinkin Gakkai Zasshi">
        <title>Isolation and characterization of a novel elastase inhibitor, AFLEI from Aspergillus flavus.</title>
        <authorList>
            <person name="Okumura Y."/>
            <person name="Ogawa K."/>
            <person name="Uchiya K."/>
            <person name="Nikai T."/>
        </authorList>
    </citation>
    <scope>MASS SPECTROMETRY</scope>
    <scope>FUNCTION</scope>
    <scope>BIOPHYSICOCHEMICAL PROPERTIES</scope>
</reference>
<evidence type="ECO:0000269" key="1">
    <source>
    </source>
</evidence>
<evidence type="ECO:0000269" key="2">
    <source>
    </source>
</evidence>
<evidence type="ECO:0000303" key="3">
    <source>
    </source>
</evidence>
<evidence type="ECO:0000303" key="4">
    <source>
    </source>
</evidence>
<evidence type="ECO:0000305" key="5"/>
<dbReference type="SMR" id="P86036"/>
<dbReference type="GO" id="GO:0005576">
    <property type="term" value="C:extracellular region"/>
    <property type="evidence" value="ECO:0007669"/>
    <property type="project" value="UniProtKB-SubCell"/>
</dbReference>
<dbReference type="GO" id="GO:0004867">
    <property type="term" value="F:serine-type endopeptidase inhibitor activity"/>
    <property type="evidence" value="ECO:0000314"/>
    <property type="project" value="UniProtKB"/>
</dbReference>
<dbReference type="Gene3D" id="3.30.10.10">
    <property type="entry name" value="Trypsin Inhibitor V, subunit A"/>
    <property type="match status" value="1"/>
</dbReference>
<dbReference type="InterPro" id="IPR021719">
    <property type="entry name" value="Prot_inh_I78"/>
</dbReference>
<dbReference type="Pfam" id="PF11720">
    <property type="entry name" value="Inhibitor_I78"/>
    <property type="match status" value="1"/>
</dbReference>
<name>IELA_ASPFL</name>
<feature type="chain" id="PRO_0000352771" description="Elastase inhibitor AFLEI">
    <location>
        <begin position="1"/>
        <end position="68"/>
    </location>
</feature>
<feature type="disulfide bond" evidence="2">
    <location>
        <begin position="5"/>
        <end position="67"/>
    </location>
</feature>
<sequence length="68" mass="7525">DPATCEKEAQFVKQELIGQPYTDAVANALQSNPIRVLHPGDMITMEYIASRLNIQVNENNEIISAHCA</sequence>
<accession>P86036</accession>
<protein>
    <recommendedName>
        <fullName evidence="3 4">Elastase inhibitor AFLEI</fullName>
    </recommendedName>
</protein>
<keyword id="KW-0903">Direct protein sequencing</keyword>
<keyword id="KW-1015">Disulfide bond</keyword>
<keyword id="KW-0646">Protease inhibitor</keyword>
<keyword id="KW-0964">Secreted</keyword>
<keyword id="KW-0722">Serine protease inhibitor</keyword>